<keyword id="KW-0903">Direct protein sequencing</keyword>
<keyword id="KW-1015">Disulfide bond</keyword>
<keyword id="KW-0255">Endonuclease</keyword>
<keyword id="KW-0378">Hydrolase</keyword>
<keyword id="KW-0456">Lyase</keyword>
<keyword id="KW-0540">Nuclease</keyword>
<keyword id="KW-0964">Secreted</keyword>
<organism>
    <name type="scientific">Aspergillus pallidus</name>
    <dbReference type="NCBI Taxonomy" id="29839"/>
    <lineage>
        <taxon>Eukaryota</taxon>
        <taxon>Fungi</taxon>
        <taxon>Dikarya</taxon>
        <taxon>Ascomycota</taxon>
        <taxon>Pezizomycotina</taxon>
        <taxon>Eurotiomycetes</taxon>
        <taxon>Eurotiomycetidae</taxon>
        <taxon>Eurotiales</taxon>
        <taxon>Aspergillaceae</taxon>
        <taxon>Aspergillus</taxon>
    </lineage>
</organism>
<accession>Q7M515</accession>
<name>RNA1_ASPPL</name>
<reference key="1">
    <citation type="journal article" date="1988" name="Bioorg. Khim.">
        <title>Amino acid sequence of ribonuclease Ap1 from Aspergillus pallidus.</title>
        <authorList>
            <person name="Shlyapnikov S.V."/>
            <person name="Bezborodova S.I."/>
            <person name="Dementiev A.A."/>
            <person name="Kulikov V.A."/>
        </authorList>
    </citation>
    <scope>PROTEIN SEQUENCE</scope>
</reference>
<reference key="2">
    <citation type="journal article" date="1988" name="Biokhimiia">
        <title>Ribonuclease Ap1 of Aspergillus pallidus: purification, determination of primary structure and crystallization.</title>
        <authorList>
            <person name="Bezborodova S.I."/>
            <person name="Ermekbaeva L.A."/>
            <person name="Shlyapnikov S.V."/>
            <person name="Polyakov K.M."/>
            <person name="Bezborodov A.M."/>
        </authorList>
    </citation>
    <scope>PROTEIN SEQUENCE</scope>
    <scope>CRYSTALLIZATION</scope>
</reference>
<evidence type="ECO:0000250" key="1"/>
<evidence type="ECO:0000305" key="2"/>
<proteinExistence type="evidence at protein level"/>
<sequence length="104" mass="11043">DCDYTCGSHCYSASAVSDAQSAGYQLYSAGQSVGRSRYPHQYRNYEGFNFPVSGNYYEWPILSSGSTYNGGSPGADRVVFNNNDELAGLITHTGASGNGFVACG</sequence>
<dbReference type="EC" id="4.6.1.24"/>
<dbReference type="PIR" id="JN0429">
    <property type="entry name" value="JN0429"/>
</dbReference>
<dbReference type="SMR" id="Q7M515"/>
<dbReference type="GO" id="GO:0005576">
    <property type="term" value="C:extracellular region"/>
    <property type="evidence" value="ECO:0007669"/>
    <property type="project" value="UniProtKB-SubCell"/>
</dbReference>
<dbReference type="GO" id="GO:0016829">
    <property type="term" value="F:lyase activity"/>
    <property type="evidence" value="ECO:0007669"/>
    <property type="project" value="UniProtKB-KW"/>
</dbReference>
<dbReference type="GO" id="GO:0046589">
    <property type="term" value="F:ribonuclease T1 activity"/>
    <property type="evidence" value="ECO:0007669"/>
    <property type="project" value="UniProtKB-EC"/>
</dbReference>
<dbReference type="GO" id="GO:0003723">
    <property type="term" value="F:RNA binding"/>
    <property type="evidence" value="ECO:0007669"/>
    <property type="project" value="InterPro"/>
</dbReference>
<dbReference type="GO" id="GO:0004521">
    <property type="term" value="F:RNA endonuclease activity"/>
    <property type="evidence" value="ECO:0007669"/>
    <property type="project" value="InterPro"/>
</dbReference>
<dbReference type="CDD" id="cd00606">
    <property type="entry name" value="fungal_RNase"/>
    <property type="match status" value="1"/>
</dbReference>
<dbReference type="Gene3D" id="3.10.450.30">
    <property type="entry name" value="Microbial ribonucleases"/>
    <property type="match status" value="1"/>
</dbReference>
<dbReference type="InterPro" id="IPR000026">
    <property type="entry name" value="N1-like"/>
</dbReference>
<dbReference type="InterPro" id="IPR016191">
    <property type="entry name" value="Ribonuclease/ribotoxin"/>
</dbReference>
<dbReference type="InterPro" id="IPR051386">
    <property type="entry name" value="Ribonuclease_N1/T1"/>
</dbReference>
<dbReference type="PANTHER" id="PTHR42104">
    <property type="entry name" value="EXTRACELLULAR GUANYL-SPECIFIC RIBONUCLEASE RNTA (AFU_ORTHOLOGUE AFUA_4G03230)"/>
    <property type="match status" value="1"/>
</dbReference>
<dbReference type="PANTHER" id="PTHR42104:SF1">
    <property type="entry name" value="EXTRACELLULAR GUANYL-SPECIFIC RIBONUCLEASE RNTA (AFU_ORTHOLOGUE AFUA_4G03230)"/>
    <property type="match status" value="1"/>
</dbReference>
<dbReference type="Pfam" id="PF00545">
    <property type="entry name" value="Ribonuclease"/>
    <property type="match status" value="1"/>
</dbReference>
<dbReference type="SUPFAM" id="SSF53933">
    <property type="entry name" value="Microbial ribonucleases"/>
    <property type="match status" value="1"/>
</dbReference>
<feature type="chain" id="PRO_0000137371" description="Guanyl-specific ribonuclease Ap1">
    <location>
        <begin position="1"/>
        <end position="104"/>
    </location>
</feature>
<feature type="active site" evidence="1">
    <location>
        <position position="40"/>
    </location>
</feature>
<feature type="active site" description="Proton acceptor" evidence="1">
    <location>
        <position position="58"/>
    </location>
</feature>
<feature type="active site" description="Proton donor" evidence="1">
    <location>
        <position position="92"/>
    </location>
</feature>
<feature type="disulfide bond" evidence="1">
    <location>
        <begin position="2"/>
        <end position="10"/>
    </location>
</feature>
<feature type="disulfide bond" evidence="1">
    <location>
        <begin position="6"/>
        <end position="103"/>
    </location>
</feature>
<comment type="catalytic activity">
    <reaction>
        <text>[RNA] containing guanosine + H2O = an [RNA fragment]-3'-guanosine-3'-phosphate + a 5'-hydroxy-ribonucleotide-3'-[RNA fragment].</text>
        <dbReference type="EC" id="4.6.1.24"/>
    </reaction>
</comment>
<comment type="subcellular location">
    <subcellularLocation>
        <location>Secreted</location>
    </subcellularLocation>
</comment>
<comment type="similarity">
    <text evidence="2">Belongs to the ribonuclease N1/T1 family.</text>
</comment>
<protein>
    <recommendedName>
        <fullName>Guanyl-specific ribonuclease Ap1</fullName>
        <shortName>ApI</shortName>
        <shortName>RNase Ap1</shortName>
        <ecNumber>4.6.1.24</ecNumber>
    </recommendedName>
</protein>